<feature type="chain" id="PRO_0000362192" description="Protein PsbN">
    <location>
        <begin position="1"/>
        <end position="43"/>
    </location>
</feature>
<feature type="transmembrane region" description="Helical" evidence="1">
    <location>
        <begin position="7"/>
        <end position="29"/>
    </location>
</feature>
<evidence type="ECO:0000255" key="1">
    <source>
        <dbReference type="HAMAP-Rule" id="MF_00293"/>
    </source>
</evidence>
<gene>
    <name evidence="1" type="primary">psbN</name>
</gene>
<protein>
    <recommendedName>
        <fullName evidence="1">Protein PsbN</fullName>
    </recommendedName>
</protein>
<geneLocation type="chloroplast"/>
<comment type="function">
    <text evidence="1">May play a role in photosystem I and II biogenesis.</text>
</comment>
<comment type="subcellular location">
    <subcellularLocation>
        <location evidence="1">Plastid</location>
        <location evidence="1">Chloroplast thylakoid membrane</location>
        <topology evidence="1">Single-pass membrane protein</topology>
    </subcellularLocation>
</comment>
<comment type="similarity">
    <text evidence="1">Belongs to the PsbN family.</text>
</comment>
<comment type="caution">
    <text evidence="1">Originally thought to be a component of PSII; based on experiments in Synechocystis, N.tabacum and barley, and its absence from PSII in T.elongatus and T.vulcanus, this is probably not true.</text>
</comment>
<reference key="1">
    <citation type="submission" date="2007-03" db="EMBL/GenBank/DDBJ databases">
        <title>Sequencing analysis of Draba nemoroza chloroplast DNA.</title>
        <authorList>
            <person name="Hosouchi T."/>
            <person name="Tsuruoka H."/>
            <person name="Kotani H."/>
        </authorList>
    </citation>
    <scope>NUCLEOTIDE SEQUENCE [LARGE SCALE GENOMIC DNA]</scope>
</reference>
<proteinExistence type="inferred from homology"/>
<organism>
    <name type="scientific">Draba nemorosa</name>
    <name type="common">Woodland whitlowgrass</name>
    <dbReference type="NCBI Taxonomy" id="171822"/>
    <lineage>
        <taxon>Eukaryota</taxon>
        <taxon>Viridiplantae</taxon>
        <taxon>Streptophyta</taxon>
        <taxon>Embryophyta</taxon>
        <taxon>Tracheophyta</taxon>
        <taxon>Spermatophyta</taxon>
        <taxon>Magnoliopsida</taxon>
        <taxon>eudicotyledons</taxon>
        <taxon>Gunneridae</taxon>
        <taxon>Pentapetalae</taxon>
        <taxon>rosids</taxon>
        <taxon>malvids</taxon>
        <taxon>Brassicales</taxon>
        <taxon>Brassicaceae</taxon>
        <taxon>Arabideae</taxon>
        <taxon>Draba</taxon>
    </lineage>
</organism>
<keyword id="KW-0150">Chloroplast</keyword>
<keyword id="KW-0472">Membrane</keyword>
<keyword id="KW-0934">Plastid</keyword>
<keyword id="KW-0793">Thylakoid</keyword>
<keyword id="KW-0812">Transmembrane</keyword>
<keyword id="KW-1133">Transmembrane helix</keyword>
<name>PSBN_DRANE</name>
<dbReference type="EMBL" id="AP009373">
    <property type="protein sequence ID" value="BAF50402.1"/>
    <property type="molecule type" value="Genomic_DNA"/>
</dbReference>
<dbReference type="RefSeq" id="YP_001123578.1">
    <property type="nucleotide sequence ID" value="NC_009272.1"/>
</dbReference>
<dbReference type="SMR" id="A4QL47"/>
<dbReference type="GeneID" id="4964755"/>
<dbReference type="GO" id="GO:0009535">
    <property type="term" value="C:chloroplast thylakoid membrane"/>
    <property type="evidence" value="ECO:0007669"/>
    <property type="project" value="UniProtKB-SubCell"/>
</dbReference>
<dbReference type="GO" id="GO:0015979">
    <property type="term" value="P:photosynthesis"/>
    <property type="evidence" value="ECO:0007669"/>
    <property type="project" value="InterPro"/>
</dbReference>
<dbReference type="HAMAP" id="MF_00293">
    <property type="entry name" value="PSII_PsbN"/>
    <property type="match status" value="1"/>
</dbReference>
<dbReference type="InterPro" id="IPR003398">
    <property type="entry name" value="PSII_PsbN"/>
</dbReference>
<dbReference type="PANTHER" id="PTHR35326">
    <property type="entry name" value="PROTEIN PSBN"/>
    <property type="match status" value="1"/>
</dbReference>
<dbReference type="PANTHER" id="PTHR35326:SF3">
    <property type="entry name" value="PROTEIN PSBN"/>
    <property type="match status" value="1"/>
</dbReference>
<dbReference type="Pfam" id="PF02468">
    <property type="entry name" value="PsbN"/>
    <property type="match status" value="1"/>
</dbReference>
<accession>A4QL47</accession>
<sequence>METATLVAIFLSGLLVSFTGYALYTAFGQPSQQLRDPFEEHGD</sequence>